<dbReference type="EC" id="7.1.2.2" evidence="1"/>
<dbReference type="EMBL" id="CP001275">
    <property type="protein sequence ID" value="ACM04575.1"/>
    <property type="molecule type" value="Genomic_DNA"/>
</dbReference>
<dbReference type="RefSeq" id="WP_015922182.1">
    <property type="nucleotide sequence ID" value="NC_011959.1"/>
</dbReference>
<dbReference type="SMR" id="B9L1H1"/>
<dbReference type="STRING" id="309801.trd_1230"/>
<dbReference type="KEGG" id="tro:trd_1230"/>
<dbReference type="eggNOG" id="COG0056">
    <property type="taxonomic scope" value="Bacteria"/>
</dbReference>
<dbReference type="HOGENOM" id="CLU_010091_2_1_0"/>
<dbReference type="OrthoDB" id="9803053at2"/>
<dbReference type="Proteomes" id="UP000000447">
    <property type="component" value="Chromosome"/>
</dbReference>
<dbReference type="GO" id="GO:0005886">
    <property type="term" value="C:plasma membrane"/>
    <property type="evidence" value="ECO:0007669"/>
    <property type="project" value="UniProtKB-SubCell"/>
</dbReference>
<dbReference type="GO" id="GO:0045259">
    <property type="term" value="C:proton-transporting ATP synthase complex"/>
    <property type="evidence" value="ECO:0007669"/>
    <property type="project" value="UniProtKB-KW"/>
</dbReference>
<dbReference type="GO" id="GO:0043531">
    <property type="term" value="F:ADP binding"/>
    <property type="evidence" value="ECO:0007669"/>
    <property type="project" value="TreeGrafter"/>
</dbReference>
<dbReference type="GO" id="GO:0005524">
    <property type="term" value="F:ATP binding"/>
    <property type="evidence" value="ECO:0007669"/>
    <property type="project" value="UniProtKB-UniRule"/>
</dbReference>
<dbReference type="GO" id="GO:0046933">
    <property type="term" value="F:proton-transporting ATP synthase activity, rotational mechanism"/>
    <property type="evidence" value="ECO:0007669"/>
    <property type="project" value="UniProtKB-UniRule"/>
</dbReference>
<dbReference type="CDD" id="cd18113">
    <property type="entry name" value="ATP-synt_F1_alpha_C"/>
    <property type="match status" value="1"/>
</dbReference>
<dbReference type="CDD" id="cd18116">
    <property type="entry name" value="ATP-synt_F1_alpha_N"/>
    <property type="match status" value="1"/>
</dbReference>
<dbReference type="CDD" id="cd01132">
    <property type="entry name" value="F1-ATPase_alpha_CD"/>
    <property type="match status" value="1"/>
</dbReference>
<dbReference type="FunFam" id="1.20.150.20:FF:000001">
    <property type="entry name" value="ATP synthase subunit alpha"/>
    <property type="match status" value="1"/>
</dbReference>
<dbReference type="FunFam" id="2.40.30.20:FF:000001">
    <property type="entry name" value="ATP synthase subunit alpha"/>
    <property type="match status" value="1"/>
</dbReference>
<dbReference type="FunFam" id="3.40.50.300:FF:000002">
    <property type="entry name" value="ATP synthase subunit alpha"/>
    <property type="match status" value="1"/>
</dbReference>
<dbReference type="Gene3D" id="2.40.30.20">
    <property type="match status" value="1"/>
</dbReference>
<dbReference type="Gene3D" id="1.20.150.20">
    <property type="entry name" value="ATP synthase alpha/beta chain, C-terminal domain"/>
    <property type="match status" value="1"/>
</dbReference>
<dbReference type="Gene3D" id="3.40.50.300">
    <property type="entry name" value="P-loop containing nucleotide triphosphate hydrolases"/>
    <property type="match status" value="1"/>
</dbReference>
<dbReference type="HAMAP" id="MF_01346">
    <property type="entry name" value="ATP_synth_alpha_bact"/>
    <property type="match status" value="1"/>
</dbReference>
<dbReference type="InterPro" id="IPR023366">
    <property type="entry name" value="ATP_synth_asu-like_sf"/>
</dbReference>
<dbReference type="InterPro" id="IPR000793">
    <property type="entry name" value="ATP_synth_asu_C"/>
</dbReference>
<dbReference type="InterPro" id="IPR038376">
    <property type="entry name" value="ATP_synth_asu_C_sf"/>
</dbReference>
<dbReference type="InterPro" id="IPR033732">
    <property type="entry name" value="ATP_synth_F1_a_nt-bd_dom"/>
</dbReference>
<dbReference type="InterPro" id="IPR005294">
    <property type="entry name" value="ATP_synth_F1_asu"/>
</dbReference>
<dbReference type="InterPro" id="IPR020003">
    <property type="entry name" value="ATPase_a/bsu_AS"/>
</dbReference>
<dbReference type="InterPro" id="IPR004100">
    <property type="entry name" value="ATPase_F1/V1/A1_a/bsu_N"/>
</dbReference>
<dbReference type="InterPro" id="IPR036121">
    <property type="entry name" value="ATPase_F1/V1/A1_a/bsu_N_sf"/>
</dbReference>
<dbReference type="InterPro" id="IPR000194">
    <property type="entry name" value="ATPase_F1/V1/A1_a/bsu_nucl-bd"/>
</dbReference>
<dbReference type="InterPro" id="IPR027417">
    <property type="entry name" value="P-loop_NTPase"/>
</dbReference>
<dbReference type="NCBIfam" id="TIGR00962">
    <property type="entry name" value="atpA"/>
    <property type="match status" value="1"/>
</dbReference>
<dbReference type="NCBIfam" id="NF009884">
    <property type="entry name" value="PRK13343.1"/>
    <property type="match status" value="1"/>
</dbReference>
<dbReference type="PANTHER" id="PTHR48082">
    <property type="entry name" value="ATP SYNTHASE SUBUNIT ALPHA, MITOCHONDRIAL"/>
    <property type="match status" value="1"/>
</dbReference>
<dbReference type="PANTHER" id="PTHR48082:SF2">
    <property type="entry name" value="ATP SYNTHASE SUBUNIT ALPHA, MITOCHONDRIAL"/>
    <property type="match status" value="1"/>
</dbReference>
<dbReference type="Pfam" id="PF00006">
    <property type="entry name" value="ATP-synt_ab"/>
    <property type="match status" value="1"/>
</dbReference>
<dbReference type="Pfam" id="PF00306">
    <property type="entry name" value="ATP-synt_ab_C"/>
    <property type="match status" value="1"/>
</dbReference>
<dbReference type="Pfam" id="PF02874">
    <property type="entry name" value="ATP-synt_ab_N"/>
    <property type="match status" value="1"/>
</dbReference>
<dbReference type="PIRSF" id="PIRSF039088">
    <property type="entry name" value="F_ATPase_subunit_alpha"/>
    <property type="match status" value="1"/>
</dbReference>
<dbReference type="SUPFAM" id="SSF47917">
    <property type="entry name" value="C-terminal domain of alpha and beta subunits of F1 ATP synthase"/>
    <property type="match status" value="1"/>
</dbReference>
<dbReference type="SUPFAM" id="SSF50615">
    <property type="entry name" value="N-terminal domain of alpha and beta subunits of F1 ATP synthase"/>
    <property type="match status" value="1"/>
</dbReference>
<dbReference type="SUPFAM" id="SSF52540">
    <property type="entry name" value="P-loop containing nucleoside triphosphate hydrolases"/>
    <property type="match status" value="1"/>
</dbReference>
<dbReference type="PROSITE" id="PS00152">
    <property type="entry name" value="ATPASE_ALPHA_BETA"/>
    <property type="match status" value="1"/>
</dbReference>
<organism>
    <name type="scientific">Thermomicrobium roseum (strain ATCC 27502 / DSM 5159 / P-2)</name>
    <dbReference type="NCBI Taxonomy" id="309801"/>
    <lineage>
        <taxon>Bacteria</taxon>
        <taxon>Pseudomonadati</taxon>
        <taxon>Thermomicrobiota</taxon>
        <taxon>Thermomicrobia</taxon>
        <taxon>Thermomicrobiales</taxon>
        <taxon>Thermomicrobiaceae</taxon>
        <taxon>Thermomicrobium</taxon>
    </lineage>
</organism>
<comment type="function">
    <text evidence="1">Produces ATP from ADP in the presence of a proton gradient across the membrane. The alpha chain is a regulatory subunit.</text>
</comment>
<comment type="catalytic activity">
    <reaction evidence="1">
        <text>ATP + H2O + 4 H(+)(in) = ADP + phosphate + 5 H(+)(out)</text>
        <dbReference type="Rhea" id="RHEA:57720"/>
        <dbReference type="ChEBI" id="CHEBI:15377"/>
        <dbReference type="ChEBI" id="CHEBI:15378"/>
        <dbReference type="ChEBI" id="CHEBI:30616"/>
        <dbReference type="ChEBI" id="CHEBI:43474"/>
        <dbReference type="ChEBI" id="CHEBI:456216"/>
        <dbReference type="EC" id="7.1.2.2"/>
    </reaction>
</comment>
<comment type="subunit">
    <text evidence="1">F-type ATPases have 2 components, CF(1) - the catalytic core - and CF(0) - the membrane proton channel. CF(1) has five subunits: alpha(3), beta(3), gamma(1), delta(1), epsilon(1). CF(0) has three main subunits: a(1), b(2) and c(9-12). The alpha and beta chains form an alternating ring which encloses part of the gamma chain. CF(1) is attached to CF(0) by a central stalk formed by the gamma and epsilon chains, while a peripheral stalk is formed by the delta and b chains.</text>
</comment>
<comment type="subcellular location">
    <subcellularLocation>
        <location evidence="1">Cell membrane</location>
        <topology evidence="1">Peripheral membrane protein</topology>
    </subcellularLocation>
</comment>
<comment type="similarity">
    <text evidence="1">Belongs to the ATPase alpha/beta chains family.</text>
</comment>
<keyword id="KW-0066">ATP synthesis</keyword>
<keyword id="KW-0067">ATP-binding</keyword>
<keyword id="KW-1003">Cell membrane</keyword>
<keyword id="KW-0139">CF(1)</keyword>
<keyword id="KW-0375">Hydrogen ion transport</keyword>
<keyword id="KW-0406">Ion transport</keyword>
<keyword id="KW-0472">Membrane</keyword>
<keyword id="KW-0547">Nucleotide-binding</keyword>
<keyword id="KW-1185">Reference proteome</keyword>
<keyword id="KW-1278">Translocase</keyword>
<keyword id="KW-0813">Transport</keyword>
<sequence length="510" mass="56051">MSVRPTEITEILKQQIEQYGSRMVVTNVGYVVQVGDGIATVHGLRDVMASELVEFENGVLGIAFNLQEDSVGVIILGDYTGIEEGDEVRATGRIASVPVGPALVGRVVNALGEPIDGKGPINTDKFRPIERIAPGVVMRQDVDTALQTGIKAIDSMIPIGRGQRELIIGDRQTGKTAIAIDTIINQKGKGVICIYVAIGQKRAQVAQTVATLERYGAMEHTIVVAATASDPAALQYIAPYAGCAMGEEIMESGGHALIVYDDLSKHAWAYRQVSLLMRRPPGREAYPGDIFYLHSRLLERAARLRDDLGGGTLTALPIVETQANDVSAYIPTNVISITDGQIYLEPDLFYAGIRPAINVGLSVSRVGGAAQIRAMRQVAGRLRLELAQFRELAAFAQFAAELDPATKRQIDRGLRLTEVLKQPQYEPMPVEEQVAIIWVATNGYLDDVLVEHVREFEKQYLDYLRTSHPQILQRIASERELKDDLIQQLHEVTRAFKQSIWAPPQERVII</sequence>
<feature type="chain" id="PRO_1000166562" description="ATP synthase subunit alpha">
    <location>
        <begin position="1"/>
        <end position="510"/>
    </location>
</feature>
<feature type="binding site" evidence="1">
    <location>
        <begin position="169"/>
        <end position="176"/>
    </location>
    <ligand>
        <name>ATP</name>
        <dbReference type="ChEBI" id="CHEBI:30616"/>
    </ligand>
</feature>
<feature type="site" description="Required for activity" evidence="1">
    <location>
        <position position="362"/>
    </location>
</feature>
<protein>
    <recommendedName>
        <fullName evidence="1">ATP synthase subunit alpha</fullName>
        <ecNumber evidence="1">7.1.2.2</ecNumber>
    </recommendedName>
    <alternativeName>
        <fullName evidence="1">ATP synthase F1 sector subunit alpha</fullName>
    </alternativeName>
    <alternativeName>
        <fullName evidence="1">F-ATPase subunit alpha</fullName>
    </alternativeName>
</protein>
<accession>B9L1H1</accession>
<name>ATPA_THERP</name>
<reference key="1">
    <citation type="journal article" date="2009" name="PLoS ONE">
        <title>Complete genome sequence of the aerobic CO-oxidizing thermophile Thermomicrobium roseum.</title>
        <authorList>
            <person name="Wu D."/>
            <person name="Raymond J."/>
            <person name="Wu M."/>
            <person name="Chatterji S."/>
            <person name="Ren Q."/>
            <person name="Graham J.E."/>
            <person name="Bryant D.A."/>
            <person name="Robb F."/>
            <person name="Colman A."/>
            <person name="Tallon L.J."/>
            <person name="Badger J.H."/>
            <person name="Madupu R."/>
            <person name="Ward N.L."/>
            <person name="Eisen J.A."/>
        </authorList>
    </citation>
    <scope>NUCLEOTIDE SEQUENCE [LARGE SCALE GENOMIC DNA]</scope>
    <source>
        <strain>ATCC 27502 / DSM 5159 / P-2</strain>
    </source>
</reference>
<proteinExistence type="inferred from homology"/>
<gene>
    <name evidence="1" type="primary">atpA</name>
    <name type="ordered locus">trd_1230</name>
</gene>
<evidence type="ECO:0000255" key="1">
    <source>
        <dbReference type="HAMAP-Rule" id="MF_01346"/>
    </source>
</evidence>